<gene>
    <name evidence="5" type="primary">TM6</name>
    <name evidence="10" type="ordered locus">VIT_04s0023g02820</name>
    <name evidence="9" type="ORF">VITISV_019954</name>
</gene>
<accession>Q003J2</accession>
<accession>F6GWR1</accession>
<sequence length="225" mass="26169">MGRGKIEIKRIENPTNRQVTYSKRRNGIFKKAQELTVLCDAKVSLIMFSNTGKFHEYTSPTITTKKVYDQYQKTLGIDLWSSHYERMQENLRKLKEINNKLRREIRQRMGEDLGDLSIEDLRGLEQKMDASLGLVRERKYHVIKTQTETYRKKVRNLEEQHGNLLLNFEAKCDDPHYGLVENDGDYESAVAFANGASNLYAFRLHQAHPNLHHDGGYGSHDLRLA</sequence>
<keyword id="KW-0238">DNA-binding</keyword>
<keyword id="KW-0287">Flowering</keyword>
<keyword id="KW-0539">Nucleus</keyword>
<keyword id="KW-1185">Reference proteome</keyword>
<keyword id="KW-0804">Transcription</keyword>
<keyword id="KW-0805">Transcription regulation</keyword>
<reference key="1">
    <citation type="journal article" date="2007" name="Gene">
        <title>Isolation of the three grape sub-lineages of B-class MADS-box TM6, PISTILLATA and APETALA3 genes which are differentially expressed during flower and fruit development.</title>
        <authorList>
            <person name="Poupin M.J."/>
            <person name="Federici F."/>
            <person name="Medina C."/>
            <person name="Matus J.T."/>
            <person name="Timmermann T."/>
            <person name="Arce-Johnson P."/>
        </authorList>
    </citation>
    <scope>NUCLEOTIDE SEQUENCE [MRNA]</scope>
    <scope>TISSUE SPECIFICITY</scope>
</reference>
<reference key="2">
    <citation type="journal article" date="2007" name="Nature">
        <title>The grapevine genome sequence suggests ancestral hexaploidization in major angiosperm phyla.</title>
        <authorList>
            <person name="Jaillon O."/>
            <person name="Aury J.-M."/>
            <person name="Noel B."/>
            <person name="Policriti A."/>
            <person name="Clepet C."/>
            <person name="Casagrande A."/>
            <person name="Choisne N."/>
            <person name="Aubourg S."/>
            <person name="Vitulo N."/>
            <person name="Jubin C."/>
            <person name="Vezzi A."/>
            <person name="Legeai F."/>
            <person name="Hugueney P."/>
            <person name="Dasilva C."/>
            <person name="Horner D."/>
            <person name="Mica E."/>
            <person name="Jublot D."/>
            <person name="Poulain J."/>
            <person name="Bruyere C."/>
            <person name="Billault A."/>
            <person name="Segurens B."/>
            <person name="Gouyvenoux M."/>
            <person name="Ugarte E."/>
            <person name="Cattonaro F."/>
            <person name="Anthouard V."/>
            <person name="Vico V."/>
            <person name="Del Fabbro C."/>
            <person name="Alaux M."/>
            <person name="Di Gaspero G."/>
            <person name="Dumas V."/>
            <person name="Felice N."/>
            <person name="Paillard S."/>
            <person name="Juman I."/>
            <person name="Moroldo M."/>
            <person name="Scalabrin S."/>
            <person name="Canaguier A."/>
            <person name="Le Clainche I."/>
            <person name="Malacrida G."/>
            <person name="Durand E."/>
            <person name="Pesole G."/>
            <person name="Laucou V."/>
            <person name="Chatelet P."/>
            <person name="Merdinoglu D."/>
            <person name="Delledonne M."/>
            <person name="Pezzotti M."/>
            <person name="Lecharny A."/>
            <person name="Scarpelli C."/>
            <person name="Artiguenave F."/>
            <person name="Pe M.E."/>
            <person name="Valle G."/>
            <person name="Morgante M."/>
            <person name="Caboche M."/>
            <person name="Adam-Blondon A.-F."/>
            <person name="Weissenbach J."/>
            <person name="Quetier F."/>
            <person name="Wincker P."/>
        </authorList>
    </citation>
    <scope>NUCLEOTIDE SEQUENCE [LARGE SCALE GENOMIC DNA]</scope>
    <source>
        <strain>cv. Pinot noir / PN40024</strain>
    </source>
</reference>
<reference key="3">
    <citation type="journal article" date="2007" name="PLoS ONE">
        <title>A high quality draft consensus sequence of the genome of a heterozygous grapevine variety.</title>
        <authorList>
            <person name="Velasco R."/>
            <person name="Zharkikh A."/>
            <person name="Troggio M."/>
            <person name="Cartwright D.A."/>
            <person name="Cestaro A."/>
            <person name="Pruss D."/>
            <person name="Pindo M."/>
            <person name="FitzGerald L.M."/>
            <person name="Vezzulli S."/>
            <person name="Reid J."/>
            <person name="Malacarne G."/>
            <person name="Iliev D."/>
            <person name="Coppola G."/>
            <person name="Wardell B."/>
            <person name="Micheletti D."/>
            <person name="Macalma T."/>
            <person name="Facci M."/>
            <person name="Mitchell J.T."/>
            <person name="Perazzolli M."/>
            <person name="Eldredge G."/>
            <person name="Gatto P."/>
            <person name="Oyzerski R."/>
            <person name="Moretto M."/>
            <person name="Gutin N."/>
            <person name="Stefanini M."/>
            <person name="Chen Y."/>
            <person name="Segala C."/>
            <person name="Davenport C."/>
            <person name="Dematte L."/>
            <person name="Mraz A."/>
            <person name="Battilana J."/>
            <person name="Stormo K."/>
            <person name="Costa F."/>
            <person name="Tao Q."/>
            <person name="Si-Ammour A."/>
            <person name="Harkins T."/>
            <person name="Lackey A."/>
            <person name="Perbost C."/>
            <person name="Taillon B."/>
            <person name="Stella A."/>
            <person name="Solovyev V."/>
            <person name="Fawcett J.A."/>
            <person name="Sterck L."/>
            <person name="Vandepoele K."/>
            <person name="Grando S.M."/>
            <person name="Toppo S."/>
            <person name="Moser C."/>
            <person name="Lanchbury J."/>
            <person name="Bogden R."/>
            <person name="Skolnick M."/>
            <person name="Sgaramella V."/>
            <person name="Bhatnagar S.K."/>
            <person name="Fontana P."/>
            <person name="Gutin A."/>
            <person name="Van de Peer Y."/>
            <person name="Salamini F."/>
            <person name="Viola R."/>
        </authorList>
    </citation>
    <scope>NUCLEOTIDE SEQUENCE [LARGE SCALE GENOMIC DNA]</scope>
    <source>
        <strain>cv. Pinot noir</strain>
    </source>
</reference>
<reference key="4">
    <citation type="journal article" date="2009" name="Plant Physiol.">
        <title>Genome-wide analysis of MIKCC-type MADS box genes in grapevine.</title>
        <authorList>
            <person name="Diaz-Riquelme J."/>
            <person name="Lijavetzky D."/>
            <person name="Martinez-Zapater J.M."/>
            <person name="Carmona M.J."/>
        </authorList>
    </citation>
    <scope>GENE FAMILY</scope>
</reference>
<reference key="5">
    <citation type="journal article" date="2016" name="BMC Genomics">
        <title>Structural and functional annotation of the MADS-box transcription factor family in grapevine.</title>
        <authorList>
            <person name="Grimplet J."/>
            <person name="Martinez-Zapater J.M."/>
            <person name="Carmona M.J."/>
        </authorList>
    </citation>
    <scope>GENE FAMILY</scope>
</reference>
<comment type="function">
    <text evidence="1">Probable transcription factor involved in flower development.</text>
</comment>
<comment type="subcellular location">
    <subcellularLocation>
        <location evidence="2">Nucleus</location>
    </subcellularLocation>
</comment>
<comment type="tissue specificity">
    <text evidence="4">Expressed during flower development in stamens, petals and carpels (PubMed:17920788). Expressed in fruits and seeds (PubMed:17920788).</text>
</comment>
<comment type="sequence caution" evidence="8">
    <conflict type="erroneous initiation">
        <sequence resource="EMBL-CDS" id="CCB44396"/>
    </conflict>
    <text>Extended N-terminus.</text>
</comment>
<evidence type="ECO:0000250" key="1">
    <source>
        <dbReference type="UniProtKB" id="Q0HA25"/>
    </source>
</evidence>
<evidence type="ECO:0000255" key="2">
    <source>
        <dbReference type="PROSITE-ProRule" id="PRU00251"/>
    </source>
</evidence>
<evidence type="ECO:0000255" key="3">
    <source>
        <dbReference type="PROSITE-ProRule" id="PRU00629"/>
    </source>
</evidence>
<evidence type="ECO:0000269" key="4">
    <source>
    </source>
</evidence>
<evidence type="ECO:0000303" key="5">
    <source>
    </source>
</evidence>
<evidence type="ECO:0000303" key="6">
    <source>
    </source>
</evidence>
<evidence type="ECO:0000303" key="7">
    <source>
    </source>
</evidence>
<evidence type="ECO:0000305" key="8"/>
<evidence type="ECO:0000312" key="9">
    <source>
        <dbReference type="EMBL" id="CAN66176.1"/>
    </source>
</evidence>
<evidence type="ECO:0000312" key="10">
    <source>
        <dbReference type="EMBL" id="CCB44396.1"/>
    </source>
</evidence>
<feature type="chain" id="PRO_0000447287" description="Agamous-like MADS-box protein TM6">
    <location>
        <begin position="1"/>
        <end position="225"/>
    </location>
</feature>
<feature type="domain" description="MADS-box" evidence="2">
    <location>
        <begin position="1"/>
        <end position="61"/>
    </location>
</feature>
<feature type="domain" description="K-box" evidence="3">
    <location>
        <begin position="84"/>
        <end position="174"/>
    </location>
</feature>
<organism>
    <name type="scientific">Vitis vinifera</name>
    <name type="common">Grape</name>
    <dbReference type="NCBI Taxonomy" id="29760"/>
    <lineage>
        <taxon>Eukaryota</taxon>
        <taxon>Viridiplantae</taxon>
        <taxon>Streptophyta</taxon>
        <taxon>Embryophyta</taxon>
        <taxon>Tracheophyta</taxon>
        <taxon>Spermatophyta</taxon>
        <taxon>Magnoliopsida</taxon>
        <taxon>eudicotyledons</taxon>
        <taxon>Gunneridae</taxon>
        <taxon>Pentapetalae</taxon>
        <taxon>rosids</taxon>
        <taxon>Vitales</taxon>
        <taxon>Vitaceae</taxon>
        <taxon>Viteae</taxon>
        <taxon>Vitis</taxon>
    </lineage>
</organism>
<proteinExistence type="evidence at transcript level"/>
<dbReference type="EMBL" id="DQ979341">
    <property type="protein sequence ID" value="ABI98021.1"/>
    <property type="molecule type" value="mRNA"/>
</dbReference>
<dbReference type="EMBL" id="FN594959">
    <property type="protein sequence ID" value="CCB44396.1"/>
    <property type="status" value="ALT_INIT"/>
    <property type="molecule type" value="Genomic_DNA"/>
</dbReference>
<dbReference type="EMBL" id="FN597020">
    <property type="status" value="NOT_ANNOTATED_CDS"/>
    <property type="molecule type" value="Genomic_DNA"/>
</dbReference>
<dbReference type="EMBL" id="AM476720">
    <property type="protein sequence ID" value="CAN66176.1"/>
    <property type="molecule type" value="Genomic_DNA"/>
</dbReference>
<dbReference type="RefSeq" id="NP_001267937.1">
    <property type="nucleotide sequence ID" value="NM_001281008.1"/>
</dbReference>
<dbReference type="SMR" id="Q003J2"/>
<dbReference type="FunCoup" id="Q003J2">
    <property type="interactions" value="214"/>
</dbReference>
<dbReference type="STRING" id="29760.Q003J2"/>
<dbReference type="PaxDb" id="29760-VIT_04s0023g02820.t01"/>
<dbReference type="EnsemblPlants" id="Vitvi04g01404_t001">
    <property type="protein sequence ID" value="Vitvi04g01404_P001"/>
    <property type="gene ID" value="Vitvi04g01404"/>
</dbReference>
<dbReference type="GeneID" id="100233014"/>
<dbReference type="Gramene" id="Vitvi04g01404_t001">
    <property type="protein sequence ID" value="Vitvi04g01404_P001"/>
    <property type="gene ID" value="Vitvi04g01404"/>
</dbReference>
<dbReference type="KEGG" id="vvi:100233014"/>
<dbReference type="eggNOG" id="KOG0014">
    <property type="taxonomic scope" value="Eukaryota"/>
</dbReference>
<dbReference type="HOGENOM" id="CLU_053053_0_0_1"/>
<dbReference type="InParanoid" id="Q003J2"/>
<dbReference type="OrthoDB" id="1898716at2759"/>
<dbReference type="Proteomes" id="UP000009183">
    <property type="component" value="Chromosome 4"/>
</dbReference>
<dbReference type="ExpressionAtlas" id="Q003J2">
    <property type="expression patterns" value="baseline and differential"/>
</dbReference>
<dbReference type="GO" id="GO:0005634">
    <property type="term" value="C:nucleus"/>
    <property type="evidence" value="ECO:0007669"/>
    <property type="project" value="UniProtKB-SubCell"/>
</dbReference>
<dbReference type="GO" id="GO:0000981">
    <property type="term" value="F:DNA-binding transcription factor activity, RNA polymerase II-specific"/>
    <property type="evidence" value="ECO:0000318"/>
    <property type="project" value="GO_Central"/>
</dbReference>
<dbReference type="GO" id="GO:0046983">
    <property type="term" value="F:protein dimerization activity"/>
    <property type="evidence" value="ECO:0007669"/>
    <property type="project" value="InterPro"/>
</dbReference>
<dbReference type="GO" id="GO:0000978">
    <property type="term" value="F:RNA polymerase II cis-regulatory region sequence-specific DNA binding"/>
    <property type="evidence" value="ECO:0000318"/>
    <property type="project" value="GO_Central"/>
</dbReference>
<dbReference type="GO" id="GO:0009908">
    <property type="term" value="P:flower development"/>
    <property type="evidence" value="ECO:0007669"/>
    <property type="project" value="UniProtKB-KW"/>
</dbReference>
<dbReference type="GO" id="GO:0045944">
    <property type="term" value="P:positive regulation of transcription by RNA polymerase II"/>
    <property type="evidence" value="ECO:0007669"/>
    <property type="project" value="InterPro"/>
</dbReference>
<dbReference type="GO" id="GO:0006357">
    <property type="term" value="P:regulation of transcription by RNA polymerase II"/>
    <property type="evidence" value="ECO:0000318"/>
    <property type="project" value="GO_Central"/>
</dbReference>
<dbReference type="CDD" id="cd00265">
    <property type="entry name" value="MADS_MEF2_like"/>
    <property type="match status" value="1"/>
</dbReference>
<dbReference type="Gene3D" id="3.40.1810.10">
    <property type="entry name" value="Transcription factor, MADS-box"/>
    <property type="match status" value="1"/>
</dbReference>
<dbReference type="InterPro" id="IPR050142">
    <property type="entry name" value="MADS-box/MEF2_TF"/>
</dbReference>
<dbReference type="InterPro" id="IPR033896">
    <property type="entry name" value="MEF2-like_N"/>
</dbReference>
<dbReference type="InterPro" id="IPR002487">
    <property type="entry name" value="TF_Kbox"/>
</dbReference>
<dbReference type="InterPro" id="IPR002100">
    <property type="entry name" value="TF_MADSbox"/>
</dbReference>
<dbReference type="InterPro" id="IPR036879">
    <property type="entry name" value="TF_MADSbox_sf"/>
</dbReference>
<dbReference type="PANTHER" id="PTHR48019">
    <property type="entry name" value="SERUM RESPONSE FACTOR HOMOLOG"/>
    <property type="match status" value="1"/>
</dbReference>
<dbReference type="Pfam" id="PF01486">
    <property type="entry name" value="K-box"/>
    <property type="match status" value="1"/>
</dbReference>
<dbReference type="Pfam" id="PF00319">
    <property type="entry name" value="SRF-TF"/>
    <property type="match status" value="1"/>
</dbReference>
<dbReference type="PRINTS" id="PR00404">
    <property type="entry name" value="MADSDOMAIN"/>
</dbReference>
<dbReference type="SMART" id="SM00432">
    <property type="entry name" value="MADS"/>
    <property type="match status" value="1"/>
</dbReference>
<dbReference type="SUPFAM" id="SSF55455">
    <property type="entry name" value="SRF-like"/>
    <property type="match status" value="1"/>
</dbReference>
<dbReference type="PROSITE" id="PS51297">
    <property type="entry name" value="K_BOX"/>
    <property type="match status" value="1"/>
</dbReference>
<dbReference type="PROSITE" id="PS00350">
    <property type="entry name" value="MADS_BOX_1"/>
    <property type="match status" value="1"/>
</dbReference>
<dbReference type="PROSITE" id="PS50066">
    <property type="entry name" value="MADS_BOX_2"/>
    <property type="match status" value="1"/>
</dbReference>
<protein>
    <recommendedName>
        <fullName evidence="8">Agamous-like MADS-box protein TM6</fullName>
    </recommendedName>
    <alternativeName>
        <fullName evidence="6">VvAP3.2</fullName>
    </alternativeName>
    <alternativeName>
        <fullName evidence="7">VviAP3b</fullName>
    </alternativeName>
</protein>
<name>TM6_VITVI</name>